<evidence type="ECO:0000269" key="1">
    <source>
    </source>
</evidence>
<evidence type="ECO:0000305" key="2"/>
<evidence type="ECO:0007829" key="3">
    <source>
        <dbReference type="PDB" id="7QV6"/>
    </source>
</evidence>
<comment type="function">
    <text evidence="1">Antimicrobial activity against L.lactis, M.luteus, P.multocida, S.aureus, S.epidermidis and S.uberis. Probably acts by disturbing membrane functions with its amphipathic structure. Shows anticancer activity.</text>
</comment>
<comment type="subcellular location">
    <subcellularLocation>
        <location>Secreted</location>
    </subcellularLocation>
</comment>
<comment type="tissue specificity">
    <text>Expressed by the skin dorsal glands.</text>
</comment>
<comment type="similarity">
    <text evidence="2">Belongs to the frog skin active peptide (FSAP) family. Aurein subfamily.</text>
</comment>
<name>AUR33_RANRN</name>
<proteinExistence type="evidence at protein level"/>
<keyword id="KW-0002">3D-structure</keyword>
<keyword id="KW-0027">Amidation</keyword>
<keyword id="KW-0878">Amphibian defense peptide</keyword>
<keyword id="KW-0044">Antibiotic</keyword>
<keyword id="KW-0929">Antimicrobial</keyword>
<keyword id="KW-0903">Direct protein sequencing</keyword>
<keyword id="KW-0964">Secreted</keyword>
<accession>P82396</accession>
<reference key="1">
    <citation type="journal article" date="2000" name="Eur. J. Biochem.">
        <title>The antibiotic and anticancer active aurein peptides from the australian bell frogs Litoria aurea and Litoria raniformis the solution structure of aurein 1.2.</title>
        <authorList>
            <person name="Rozek T."/>
            <person name="Wegener K.L."/>
            <person name="Bowie J.H."/>
            <person name="Olver I.N."/>
            <person name="Carver J.A."/>
            <person name="Wallace J.C."/>
            <person name="Tyler M.J."/>
        </authorList>
    </citation>
    <scope>PROTEIN SEQUENCE</scope>
    <scope>AMIDATION AT ILE-17</scope>
    <scope>FUNCTION</scope>
    <source>
        <tissue>Skin secretion</tissue>
    </source>
</reference>
<dbReference type="PDB" id="7QV6">
    <property type="method" value="EM"/>
    <property type="resolution" value="3.50 A"/>
    <property type="chains" value="A/B/C/D/E/F/G/H/I/J/K/L/M/N/O/P/Q/R=1-17"/>
</dbReference>
<dbReference type="PDBsum" id="7QV6"/>
<dbReference type="EMDB" id="EMD-14168"/>
<dbReference type="SMR" id="P82396"/>
<dbReference type="GO" id="GO:0005576">
    <property type="term" value="C:extracellular region"/>
    <property type="evidence" value="ECO:0007669"/>
    <property type="project" value="UniProtKB-SubCell"/>
</dbReference>
<dbReference type="GO" id="GO:0042742">
    <property type="term" value="P:defense response to bacterium"/>
    <property type="evidence" value="ECO:0007669"/>
    <property type="project" value="UniProtKB-KW"/>
</dbReference>
<dbReference type="InterPro" id="IPR013157">
    <property type="entry name" value="Aurein_antimicrobial_peptide"/>
</dbReference>
<dbReference type="Pfam" id="PF08256">
    <property type="entry name" value="Antimicrobial20"/>
    <property type="match status" value="1"/>
</dbReference>
<protein>
    <recommendedName>
        <fullName>Aurein-3.3</fullName>
    </recommendedName>
    <component>
        <recommendedName>
            <fullName>Aurein-3.3.1</fullName>
        </recommendedName>
    </component>
</protein>
<sequence>GLFDIVKKIAGHIVSSI</sequence>
<organism>
    <name type="scientific">Ranoidea raniformis</name>
    <name type="common">Southern bell frog</name>
    <name type="synonym">Litoria raniformis</name>
    <dbReference type="NCBI Taxonomy" id="116057"/>
    <lineage>
        <taxon>Eukaryota</taxon>
        <taxon>Metazoa</taxon>
        <taxon>Chordata</taxon>
        <taxon>Craniata</taxon>
        <taxon>Vertebrata</taxon>
        <taxon>Euteleostomi</taxon>
        <taxon>Amphibia</taxon>
        <taxon>Batrachia</taxon>
        <taxon>Anura</taxon>
        <taxon>Neobatrachia</taxon>
        <taxon>Hyloidea</taxon>
        <taxon>Hylidae</taxon>
        <taxon>Pelodryadinae</taxon>
        <taxon>Ranoidea</taxon>
    </lineage>
</organism>
<feature type="peptide" id="PRO_0000010157" description="Aurein-3.3">
    <location>
        <begin position="1"/>
        <end position="17"/>
    </location>
</feature>
<feature type="peptide" id="PRO_0000010158" description="Aurein-3.3.1">
    <location>
        <begin position="3"/>
        <end position="17"/>
    </location>
</feature>
<feature type="modified residue" description="Isoleucine amide" evidence="1">
    <location>
        <position position="17"/>
    </location>
</feature>
<feature type="strand" evidence="3">
    <location>
        <begin position="2"/>
        <end position="10"/>
    </location>
</feature>
<feature type="strand" evidence="3">
    <location>
        <begin position="12"/>
        <end position="16"/>
    </location>
</feature>